<dbReference type="EC" id="2.7.8.-" evidence="1"/>
<dbReference type="EMBL" id="CP000800">
    <property type="protein sequence ID" value="ABV20793.1"/>
    <property type="molecule type" value="Genomic_DNA"/>
</dbReference>
<dbReference type="RefSeq" id="WP_000214516.1">
    <property type="nucleotide sequence ID" value="NC_009801.1"/>
</dbReference>
<dbReference type="SMR" id="A7ZL20"/>
<dbReference type="GeneID" id="93775314"/>
<dbReference type="KEGG" id="ecw:EcE24377A_1397"/>
<dbReference type="HOGENOM" id="CLU_038053_1_0_6"/>
<dbReference type="Proteomes" id="UP000001122">
    <property type="component" value="Chromosome"/>
</dbReference>
<dbReference type="GO" id="GO:0005886">
    <property type="term" value="C:plasma membrane"/>
    <property type="evidence" value="ECO:0007669"/>
    <property type="project" value="UniProtKB-SubCell"/>
</dbReference>
<dbReference type="GO" id="GO:0008808">
    <property type="term" value="F:cardiolipin synthase activity"/>
    <property type="evidence" value="ECO:0007669"/>
    <property type="project" value="InterPro"/>
</dbReference>
<dbReference type="GO" id="GO:0032049">
    <property type="term" value="P:cardiolipin biosynthetic process"/>
    <property type="evidence" value="ECO:0007669"/>
    <property type="project" value="InterPro"/>
</dbReference>
<dbReference type="CDD" id="cd09152">
    <property type="entry name" value="PLDc_EcCLS_like_1"/>
    <property type="match status" value="1"/>
</dbReference>
<dbReference type="CDD" id="cd09158">
    <property type="entry name" value="PLDc_EcCLS_like_2"/>
    <property type="match status" value="1"/>
</dbReference>
<dbReference type="FunFam" id="3.30.870.10:FF:000002">
    <property type="entry name" value="Cardiolipin synthase A"/>
    <property type="match status" value="1"/>
</dbReference>
<dbReference type="FunFam" id="3.30.870.10:FF:000003">
    <property type="entry name" value="Cardiolipin synthase A"/>
    <property type="match status" value="1"/>
</dbReference>
<dbReference type="Gene3D" id="3.30.870.10">
    <property type="entry name" value="Endonuclease Chain A"/>
    <property type="match status" value="2"/>
</dbReference>
<dbReference type="HAMAP" id="MF_00190">
    <property type="entry name" value="Cardiolipin_synth_ClsA"/>
    <property type="match status" value="1"/>
</dbReference>
<dbReference type="InterPro" id="IPR022924">
    <property type="entry name" value="Cardiolipin_synthase"/>
</dbReference>
<dbReference type="InterPro" id="IPR030840">
    <property type="entry name" value="CL_synthase_A"/>
</dbReference>
<dbReference type="InterPro" id="IPR027379">
    <property type="entry name" value="CLS_N"/>
</dbReference>
<dbReference type="InterPro" id="IPR025202">
    <property type="entry name" value="PLD-like_dom"/>
</dbReference>
<dbReference type="InterPro" id="IPR001736">
    <property type="entry name" value="PLipase_D/transphosphatidylase"/>
</dbReference>
<dbReference type="NCBIfam" id="TIGR04265">
    <property type="entry name" value="bac_cardiolipin"/>
    <property type="match status" value="1"/>
</dbReference>
<dbReference type="PANTHER" id="PTHR21248">
    <property type="entry name" value="CARDIOLIPIN SYNTHASE"/>
    <property type="match status" value="1"/>
</dbReference>
<dbReference type="PANTHER" id="PTHR21248:SF22">
    <property type="entry name" value="PHOSPHOLIPASE D"/>
    <property type="match status" value="1"/>
</dbReference>
<dbReference type="Pfam" id="PF13091">
    <property type="entry name" value="PLDc_2"/>
    <property type="match status" value="2"/>
</dbReference>
<dbReference type="Pfam" id="PF13396">
    <property type="entry name" value="PLDc_N"/>
    <property type="match status" value="1"/>
</dbReference>
<dbReference type="SMART" id="SM00155">
    <property type="entry name" value="PLDc"/>
    <property type="match status" value="2"/>
</dbReference>
<dbReference type="SUPFAM" id="SSF56024">
    <property type="entry name" value="Phospholipase D/nuclease"/>
    <property type="match status" value="2"/>
</dbReference>
<dbReference type="PROSITE" id="PS50035">
    <property type="entry name" value="PLD"/>
    <property type="match status" value="2"/>
</dbReference>
<proteinExistence type="inferred from homology"/>
<protein>
    <recommendedName>
        <fullName evidence="1">Cardiolipin synthase A</fullName>
        <shortName evidence="1">CL synthase</shortName>
        <ecNumber evidence="1">2.7.8.-</ecNumber>
    </recommendedName>
</protein>
<name>CLSA_ECO24</name>
<feature type="chain" id="PRO_1000058481" description="Cardiolipin synthase A">
    <location>
        <begin position="1"/>
        <end position="486"/>
    </location>
</feature>
<feature type="transmembrane region" description="Helical" evidence="1">
    <location>
        <begin position="3"/>
        <end position="23"/>
    </location>
</feature>
<feature type="transmembrane region" description="Helical" evidence="1">
    <location>
        <begin position="38"/>
        <end position="58"/>
    </location>
</feature>
<feature type="domain" description="PLD phosphodiesterase 1" evidence="1">
    <location>
        <begin position="219"/>
        <end position="246"/>
    </location>
</feature>
<feature type="domain" description="PLD phosphodiesterase 2" evidence="1">
    <location>
        <begin position="399"/>
        <end position="426"/>
    </location>
</feature>
<feature type="active site" evidence="1">
    <location>
        <position position="224"/>
    </location>
</feature>
<feature type="active site" evidence="1">
    <location>
        <position position="226"/>
    </location>
</feature>
<feature type="active site" evidence="1">
    <location>
        <position position="231"/>
    </location>
</feature>
<feature type="active site" evidence="1">
    <location>
        <position position="404"/>
    </location>
</feature>
<feature type="active site" evidence="1">
    <location>
        <position position="406"/>
    </location>
</feature>
<feature type="active site" evidence="1">
    <location>
        <position position="411"/>
    </location>
</feature>
<accession>A7ZL20</accession>
<reference key="1">
    <citation type="journal article" date="2008" name="J. Bacteriol.">
        <title>The pangenome structure of Escherichia coli: comparative genomic analysis of E. coli commensal and pathogenic isolates.</title>
        <authorList>
            <person name="Rasko D.A."/>
            <person name="Rosovitz M.J."/>
            <person name="Myers G.S.A."/>
            <person name="Mongodin E.F."/>
            <person name="Fricke W.F."/>
            <person name="Gajer P."/>
            <person name="Crabtree J."/>
            <person name="Sebaihia M."/>
            <person name="Thomson N.R."/>
            <person name="Chaudhuri R."/>
            <person name="Henderson I.R."/>
            <person name="Sperandio V."/>
            <person name="Ravel J."/>
        </authorList>
    </citation>
    <scope>NUCLEOTIDE SEQUENCE [LARGE SCALE GENOMIC DNA]</scope>
    <source>
        <strain>E24377A / ETEC</strain>
    </source>
</reference>
<sequence>MTTVYTLVSWLAILGYWLLIAGVTLRILMKRRAVPSAMAWLLIIYILPLVGIIAYLAVGELHLGKRRAERARAMWPSTAKWLNDLKACKHIFAEENSSVAAPLFKLCERRQGIAGVKGNQLQLMTESDDVMQALIRDIQLARHNIEMVFYIWQPGGMADQVAESLMAAARRGIHCRLMLDSAGSVAFFRSPWPELMRNAGIEVVEALKVNLMRVFLRRMDLRQHRKMIMIDNYIAYTGSMNMVDPRYFKQDAGVGQWIDLMARMEGPIATAMGIIYSCDWEIETGKRILPPPPDVNIMPFEQASGHTIHTIASGPGFPEDLIHQALLTAAYSAREYLIMTTPYFVPSDDLLHAICTAAQRGVDVSIILPRKNDSMLVGWASRAFFTELLAAGVKIYQFEGGLLHTKSVLVDGELSLVGTVNLDMRSLWLNFEITLAIDDKGFGADLAAVQDDYISRSRLLDARLWLKRPLWQRVAERLFYFFSPLL</sequence>
<gene>
    <name evidence="1" type="primary">clsA</name>
    <name type="synonym">cls</name>
    <name type="ordered locus">EcE24377A_1397</name>
</gene>
<keyword id="KW-0997">Cell inner membrane</keyword>
<keyword id="KW-1003">Cell membrane</keyword>
<keyword id="KW-0444">Lipid biosynthesis</keyword>
<keyword id="KW-0443">Lipid metabolism</keyword>
<keyword id="KW-0472">Membrane</keyword>
<keyword id="KW-0594">Phospholipid biosynthesis</keyword>
<keyword id="KW-1208">Phospholipid metabolism</keyword>
<keyword id="KW-1185">Reference proteome</keyword>
<keyword id="KW-0677">Repeat</keyword>
<keyword id="KW-0808">Transferase</keyword>
<keyword id="KW-0812">Transmembrane</keyword>
<keyword id="KW-1133">Transmembrane helix</keyword>
<organism>
    <name type="scientific">Escherichia coli O139:H28 (strain E24377A / ETEC)</name>
    <dbReference type="NCBI Taxonomy" id="331111"/>
    <lineage>
        <taxon>Bacteria</taxon>
        <taxon>Pseudomonadati</taxon>
        <taxon>Pseudomonadota</taxon>
        <taxon>Gammaproteobacteria</taxon>
        <taxon>Enterobacterales</taxon>
        <taxon>Enterobacteriaceae</taxon>
        <taxon>Escherichia</taxon>
    </lineage>
</organism>
<comment type="function">
    <text evidence="1">Catalyzes the reversible phosphatidyl group transfer from one phosphatidylglycerol molecule to another to form cardiolipin (CL) (diphosphatidylglycerol) and glycerol.</text>
</comment>
<comment type="catalytic activity">
    <reaction evidence="1">
        <text>2 a 1,2-diacyl-sn-glycero-3-phospho-(1'-sn-glycerol) = a cardiolipin + glycerol</text>
        <dbReference type="Rhea" id="RHEA:31451"/>
        <dbReference type="ChEBI" id="CHEBI:17754"/>
        <dbReference type="ChEBI" id="CHEBI:62237"/>
        <dbReference type="ChEBI" id="CHEBI:64716"/>
    </reaction>
</comment>
<comment type="subcellular location">
    <subcellularLocation>
        <location evidence="1">Cell inner membrane</location>
        <topology evidence="1">Multi-pass membrane protein</topology>
    </subcellularLocation>
</comment>
<comment type="similarity">
    <text evidence="1">Belongs to the phospholipase D family. Cardiolipin synthase subfamily. ClsA sub-subfamily.</text>
</comment>
<evidence type="ECO:0000255" key="1">
    <source>
        <dbReference type="HAMAP-Rule" id="MF_00190"/>
    </source>
</evidence>